<keyword id="KW-0067">ATP-binding</keyword>
<keyword id="KW-0131">Cell cycle</keyword>
<keyword id="KW-0132">Cell division</keyword>
<keyword id="KW-0133">Cell shape</keyword>
<keyword id="KW-0961">Cell wall biogenesis/degradation</keyword>
<keyword id="KW-0963">Cytoplasm</keyword>
<keyword id="KW-0436">Ligase</keyword>
<keyword id="KW-0547">Nucleotide-binding</keyword>
<keyword id="KW-0573">Peptidoglycan synthesis</keyword>
<dbReference type="EC" id="6.3.2.9" evidence="1"/>
<dbReference type="EMBL" id="AP007255">
    <property type="protein sequence ID" value="BAE52650.1"/>
    <property type="molecule type" value="Genomic_DNA"/>
</dbReference>
<dbReference type="RefSeq" id="WP_011386200.1">
    <property type="nucleotide sequence ID" value="NC_007626.1"/>
</dbReference>
<dbReference type="SMR" id="Q2W0H5"/>
<dbReference type="STRING" id="342108.amb3846"/>
<dbReference type="KEGG" id="mag:amb3846"/>
<dbReference type="HOGENOM" id="CLU_032540_3_0_5"/>
<dbReference type="OrthoDB" id="9809796at2"/>
<dbReference type="UniPathway" id="UPA00219"/>
<dbReference type="Proteomes" id="UP000007058">
    <property type="component" value="Chromosome"/>
</dbReference>
<dbReference type="GO" id="GO:0005737">
    <property type="term" value="C:cytoplasm"/>
    <property type="evidence" value="ECO:0007669"/>
    <property type="project" value="UniProtKB-SubCell"/>
</dbReference>
<dbReference type="GO" id="GO:0005524">
    <property type="term" value="F:ATP binding"/>
    <property type="evidence" value="ECO:0007669"/>
    <property type="project" value="UniProtKB-UniRule"/>
</dbReference>
<dbReference type="GO" id="GO:0004326">
    <property type="term" value="F:tetrahydrofolylpolyglutamate synthase activity"/>
    <property type="evidence" value="ECO:0007669"/>
    <property type="project" value="InterPro"/>
</dbReference>
<dbReference type="GO" id="GO:0008764">
    <property type="term" value="F:UDP-N-acetylmuramoylalanine-D-glutamate ligase activity"/>
    <property type="evidence" value="ECO:0007669"/>
    <property type="project" value="UniProtKB-UniRule"/>
</dbReference>
<dbReference type="GO" id="GO:0051301">
    <property type="term" value="P:cell division"/>
    <property type="evidence" value="ECO:0007669"/>
    <property type="project" value="UniProtKB-KW"/>
</dbReference>
<dbReference type="GO" id="GO:0071555">
    <property type="term" value="P:cell wall organization"/>
    <property type="evidence" value="ECO:0007669"/>
    <property type="project" value="UniProtKB-KW"/>
</dbReference>
<dbReference type="GO" id="GO:0009252">
    <property type="term" value="P:peptidoglycan biosynthetic process"/>
    <property type="evidence" value="ECO:0007669"/>
    <property type="project" value="UniProtKB-UniRule"/>
</dbReference>
<dbReference type="GO" id="GO:0008360">
    <property type="term" value="P:regulation of cell shape"/>
    <property type="evidence" value="ECO:0007669"/>
    <property type="project" value="UniProtKB-KW"/>
</dbReference>
<dbReference type="Gene3D" id="3.90.190.20">
    <property type="entry name" value="Mur ligase, C-terminal domain"/>
    <property type="match status" value="1"/>
</dbReference>
<dbReference type="Gene3D" id="3.40.1190.10">
    <property type="entry name" value="Mur-like, catalytic domain"/>
    <property type="match status" value="1"/>
</dbReference>
<dbReference type="Gene3D" id="3.40.50.720">
    <property type="entry name" value="NAD(P)-binding Rossmann-like Domain"/>
    <property type="match status" value="1"/>
</dbReference>
<dbReference type="HAMAP" id="MF_00639">
    <property type="entry name" value="MurD"/>
    <property type="match status" value="1"/>
</dbReference>
<dbReference type="InterPro" id="IPR018109">
    <property type="entry name" value="Folylpolyglutamate_synth_CS"/>
</dbReference>
<dbReference type="InterPro" id="IPR036565">
    <property type="entry name" value="Mur-like_cat_sf"/>
</dbReference>
<dbReference type="InterPro" id="IPR004101">
    <property type="entry name" value="Mur_ligase_C"/>
</dbReference>
<dbReference type="InterPro" id="IPR036615">
    <property type="entry name" value="Mur_ligase_C_dom_sf"/>
</dbReference>
<dbReference type="InterPro" id="IPR013221">
    <property type="entry name" value="Mur_ligase_cen"/>
</dbReference>
<dbReference type="InterPro" id="IPR005762">
    <property type="entry name" value="MurD"/>
</dbReference>
<dbReference type="NCBIfam" id="TIGR01087">
    <property type="entry name" value="murD"/>
    <property type="match status" value="1"/>
</dbReference>
<dbReference type="PANTHER" id="PTHR43692">
    <property type="entry name" value="UDP-N-ACETYLMURAMOYLALANINE--D-GLUTAMATE LIGASE"/>
    <property type="match status" value="1"/>
</dbReference>
<dbReference type="PANTHER" id="PTHR43692:SF1">
    <property type="entry name" value="UDP-N-ACETYLMURAMOYLALANINE--D-GLUTAMATE LIGASE"/>
    <property type="match status" value="1"/>
</dbReference>
<dbReference type="Pfam" id="PF02875">
    <property type="entry name" value="Mur_ligase_C"/>
    <property type="match status" value="1"/>
</dbReference>
<dbReference type="Pfam" id="PF08245">
    <property type="entry name" value="Mur_ligase_M"/>
    <property type="match status" value="1"/>
</dbReference>
<dbReference type="SUPFAM" id="SSF51984">
    <property type="entry name" value="MurCD N-terminal domain"/>
    <property type="match status" value="1"/>
</dbReference>
<dbReference type="SUPFAM" id="SSF53623">
    <property type="entry name" value="MurD-like peptide ligases, catalytic domain"/>
    <property type="match status" value="1"/>
</dbReference>
<dbReference type="SUPFAM" id="SSF53244">
    <property type="entry name" value="MurD-like peptide ligases, peptide-binding domain"/>
    <property type="match status" value="1"/>
</dbReference>
<proteinExistence type="inferred from homology"/>
<reference key="1">
    <citation type="journal article" date="2005" name="DNA Res.">
        <title>Complete genome sequence of the facultative anaerobic magnetotactic bacterium Magnetospirillum sp. strain AMB-1.</title>
        <authorList>
            <person name="Matsunaga T."/>
            <person name="Okamura Y."/>
            <person name="Fukuda Y."/>
            <person name="Wahyudi A.T."/>
            <person name="Murase Y."/>
            <person name="Takeyama H."/>
        </authorList>
    </citation>
    <scope>NUCLEOTIDE SEQUENCE [LARGE SCALE GENOMIC DNA]</scope>
    <source>
        <strain>ATCC 700264 / AMB-1</strain>
    </source>
</reference>
<organism>
    <name type="scientific">Paramagnetospirillum magneticum (strain ATCC 700264 / AMB-1)</name>
    <name type="common">Magnetospirillum magneticum</name>
    <dbReference type="NCBI Taxonomy" id="342108"/>
    <lineage>
        <taxon>Bacteria</taxon>
        <taxon>Pseudomonadati</taxon>
        <taxon>Pseudomonadota</taxon>
        <taxon>Alphaproteobacteria</taxon>
        <taxon>Rhodospirillales</taxon>
        <taxon>Magnetospirillaceae</taxon>
        <taxon>Paramagnetospirillum</taxon>
    </lineage>
</organism>
<accession>Q2W0H5</accession>
<name>MURD_PARM1</name>
<sequence>MISVPLLKGKRVLVMGLGKSGTATARALLAAGAGVMAWDDGEAARKSGAEAGIPIRDPSLLPLDKADLLVWSPGIPHTHPQPHPLAEKARAANLPMVCDVELLAQALPGARMLAVTGTNGKSTTTTLLAHVLDECGLPVAAGGNLGTAALDLPELPGDGRYVLELSSYQLELTHSLKLGVAILLNVTPDHLGRHGGMAGYIAAKRRVFDFLTPGGAAVVGIDDGPCRAIVAELDRRGIRVVKISVDSVLAEGVSAPEGVLLDNAKPVCDLKTIPSLPGRHNWQNACAVYAAARAEGLSPKQIAQALATYPGLAHRQELVGEDHGIAWINDSKATNADAVEKALVCYDHVYWILGGQAKEGGIASLEKHFGRIQHAFLIGEATEAFAATLDGKVRFTRCATLDKAVAAARNLAVSDSIPGAVVLLSPACASWDQFTSFEHRGDTFRELVQAFDQGGAA</sequence>
<evidence type="ECO:0000255" key="1">
    <source>
        <dbReference type="HAMAP-Rule" id="MF_00639"/>
    </source>
</evidence>
<feature type="chain" id="PRO_0000257201" description="UDP-N-acetylmuramoylalanine--D-glutamate ligase">
    <location>
        <begin position="1"/>
        <end position="457"/>
    </location>
</feature>
<feature type="binding site" evidence="1">
    <location>
        <begin position="117"/>
        <end position="123"/>
    </location>
    <ligand>
        <name>ATP</name>
        <dbReference type="ChEBI" id="CHEBI:30616"/>
    </ligand>
</feature>
<comment type="function">
    <text evidence="1">Cell wall formation. Catalyzes the addition of glutamate to the nucleotide precursor UDP-N-acetylmuramoyl-L-alanine (UMA).</text>
</comment>
<comment type="catalytic activity">
    <reaction evidence="1">
        <text>UDP-N-acetyl-alpha-D-muramoyl-L-alanine + D-glutamate + ATP = UDP-N-acetyl-alpha-D-muramoyl-L-alanyl-D-glutamate + ADP + phosphate + H(+)</text>
        <dbReference type="Rhea" id="RHEA:16429"/>
        <dbReference type="ChEBI" id="CHEBI:15378"/>
        <dbReference type="ChEBI" id="CHEBI:29986"/>
        <dbReference type="ChEBI" id="CHEBI:30616"/>
        <dbReference type="ChEBI" id="CHEBI:43474"/>
        <dbReference type="ChEBI" id="CHEBI:83898"/>
        <dbReference type="ChEBI" id="CHEBI:83900"/>
        <dbReference type="ChEBI" id="CHEBI:456216"/>
        <dbReference type="EC" id="6.3.2.9"/>
    </reaction>
</comment>
<comment type="pathway">
    <text evidence="1">Cell wall biogenesis; peptidoglycan biosynthesis.</text>
</comment>
<comment type="subcellular location">
    <subcellularLocation>
        <location evidence="1">Cytoplasm</location>
    </subcellularLocation>
</comment>
<comment type="similarity">
    <text evidence="1">Belongs to the MurCDEF family.</text>
</comment>
<protein>
    <recommendedName>
        <fullName evidence="1">UDP-N-acetylmuramoylalanine--D-glutamate ligase</fullName>
        <ecNumber evidence="1">6.3.2.9</ecNumber>
    </recommendedName>
    <alternativeName>
        <fullName evidence="1">D-glutamic acid-adding enzyme</fullName>
    </alternativeName>
    <alternativeName>
        <fullName evidence="1">UDP-N-acetylmuramoyl-L-alanyl-D-glutamate synthetase</fullName>
    </alternativeName>
</protein>
<gene>
    <name evidence="1" type="primary">murD</name>
    <name type="ordered locus">amb3846</name>
</gene>